<reference key="1">
    <citation type="journal article" date="2002" name="Genome Res.">
        <title>The genome of Methanosarcina acetivorans reveals extensive metabolic and physiological diversity.</title>
        <authorList>
            <person name="Galagan J.E."/>
            <person name="Nusbaum C."/>
            <person name="Roy A."/>
            <person name="Endrizzi M.G."/>
            <person name="Macdonald P."/>
            <person name="FitzHugh W."/>
            <person name="Calvo S."/>
            <person name="Engels R."/>
            <person name="Smirnov S."/>
            <person name="Atnoor D."/>
            <person name="Brown A."/>
            <person name="Allen N."/>
            <person name="Naylor J."/>
            <person name="Stange-Thomann N."/>
            <person name="DeArellano K."/>
            <person name="Johnson R."/>
            <person name="Linton L."/>
            <person name="McEwan P."/>
            <person name="McKernan K."/>
            <person name="Talamas J."/>
            <person name="Tirrell A."/>
            <person name="Ye W."/>
            <person name="Zimmer A."/>
            <person name="Barber R.D."/>
            <person name="Cann I."/>
            <person name="Graham D.E."/>
            <person name="Grahame D.A."/>
            <person name="Guss A.M."/>
            <person name="Hedderich R."/>
            <person name="Ingram-Smith C."/>
            <person name="Kuettner H.C."/>
            <person name="Krzycki J.A."/>
            <person name="Leigh J.A."/>
            <person name="Li W."/>
            <person name="Liu J."/>
            <person name="Mukhopadhyay B."/>
            <person name="Reeve J.N."/>
            <person name="Smith K."/>
            <person name="Springer T.A."/>
            <person name="Umayam L.A."/>
            <person name="White O."/>
            <person name="White R.H."/>
            <person name="de Macario E.C."/>
            <person name="Ferry J.G."/>
            <person name="Jarrell K.F."/>
            <person name="Jing H."/>
            <person name="Macario A.J.L."/>
            <person name="Paulsen I.T."/>
            <person name="Pritchett M."/>
            <person name="Sowers K.R."/>
            <person name="Swanson R.V."/>
            <person name="Zinder S.H."/>
            <person name="Lander E."/>
            <person name="Metcalf W.W."/>
            <person name="Birren B."/>
        </authorList>
    </citation>
    <scope>NUCLEOTIDE SEQUENCE [LARGE SCALE GENOMIC DNA]</scope>
    <source>
        <strain>ATCC 35395 / DSM 2834 / JCM 12185 / C2A</strain>
    </source>
</reference>
<reference key="2">
    <citation type="journal article" date="2009" name="Biochem. J.">
        <title>Convergent evolution of coenzyme M biosynthesis in the Methanosarcinales: cysteate synthase evolved from an ancestral threonine synthase.</title>
        <authorList>
            <person name="Graham D.E."/>
            <person name="Taylor S.M."/>
            <person name="Wolf R.Z."/>
            <person name="Namboori S.C."/>
        </authorList>
    </citation>
    <scope>FUNCTION AS A SULFOPYRUVATE DECARBOXYLASE</scope>
    <scope>CATALYTIC ACTIVITY</scope>
    <scope>SUBSTRATE SPECIFICITY</scope>
    <scope>COFACTOR</scope>
</reference>
<keyword id="KW-0174">Coenzyme M biosynthesis</keyword>
<keyword id="KW-0210">Decarboxylase</keyword>
<keyword id="KW-0456">Lyase</keyword>
<keyword id="KW-1185">Reference proteome</keyword>
<keyword id="KW-0786">Thiamine pyrophosphate</keyword>
<proteinExistence type="evidence at protein level"/>
<sequence>MYVVNPEEKVIEIMKQTGIDLAATLPCDRIKNLLPLVSENFPEIKLTREENGVGICAGIYLAGGKPMMLIQSTGLGNMINALESLNVTCKIPLPILASWRGVYKEGIEAQVPLGAHLPSILEGAGLTYTIIGETEKLPLLENVILDAFENSRPHIALVSPKVWEASECCAWQAAGMPIKPEIMERTCRFSLTSGTLKPFMLRNDAICTLASELDDEITVTNLGVPCKELYACRDRELNFYMFGSMGLVSSIGLGLALRSEKTVITFDGDGSLLMNPNALLEIAKEAPKNLIIIALDNGAYGSTGSQETCALRYIDLEIFANACGIQNTAKVNSKEGVIEAFRKFKAMRELSFIHVILKPGNTNAPNIPMSPEEATKRFKETLDVKKF</sequence>
<protein>
    <recommendedName>
        <fullName evidence="2">Sulfopyruvate decarboxylase</fullName>
        <shortName evidence="2">SpyrDC</shortName>
        <ecNumber evidence="1">4.1.1.79</ecNumber>
    </recommendedName>
</protein>
<organism>
    <name type="scientific">Methanosarcina acetivorans (strain ATCC 35395 / DSM 2834 / JCM 12185 / C2A)</name>
    <dbReference type="NCBI Taxonomy" id="188937"/>
    <lineage>
        <taxon>Archaea</taxon>
        <taxon>Methanobacteriati</taxon>
        <taxon>Methanobacteriota</taxon>
        <taxon>Stenosarchaea group</taxon>
        <taxon>Methanomicrobia</taxon>
        <taxon>Methanosarcinales</taxon>
        <taxon>Methanosarcinaceae</taxon>
        <taxon>Methanosarcina</taxon>
    </lineage>
</organism>
<name>COMDE_METAC</name>
<feature type="chain" id="PRO_0000392657" description="Sulfopyruvate decarboxylase">
    <location>
        <begin position="1"/>
        <end position="387"/>
    </location>
</feature>
<evidence type="ECO:0000269" key="1">
    <source>
    </source>
</evidence>
<evidence type="ECO:0000303" key="2">
    <source>
    </source>
</evidence>
<evidence type="ECO:0000305" key="3"/>
<accession>Q8TKU6</accession>
<comment type="function">
    <text evidence="1">Involved in the biosynthesis of the coenzyme M (2-mercaptoethanesulfonic acid). Catalyzes the decarboxylation of sulfopyruvate to sulfoacetaldehyde. Is not able to decarboxylate the analogous compounds 2-oxoglutarate or 2-oxosuberate.</text>
</comment>
<comment type="catalytic activity">
    <reaction evidence="1">
        <text>3-sulfopyruvate + H(+) = sulfoacetaldehyde + CO2</text>
        <dbReference type="Rhea" id="RHEA:20948"/>
        <dbReference type="ChEBI" id="CHEBI:15378"/>
        <dbReference type="ChEBI" id="CHEBI:16526"/>
        <dbReference type="ChEBI" id="CHEBI:57940"/>
        <dbReference type="ChEBI" id="CHEBI:58246"/>
        <dbReference type="EC" id="4.1.1.79"/>
    </reaction>
</comment>
<comment type="cofactor">
    <cofactor evidence="1">
        <name>thiamine diphosphate</name>
        <dbReference type="ChEBI" id="CHEBI:58937"/>
    </cofactor>
    <text evidence="1">Binds 1 thiamine pyrophosphate per subunit.</text>
</comment>
<comment type="pathway">
    <text evidence="3">Cofactor biosynthesis; coenzyme M biosynthesis.</text>
</comment>
<comment type="similarity">
    <text evidence="3">Belongs to the TPP enzyme family.</text>
</comment>
<gene>
    <name evidence="2" type="primary">comDE</name>
    <name type="ordered locus">MA_3298</name>
</gene>
<dbReference type="EC" id="4.1.1.79" evidence="1"/>
<dbReference type="EMBL" id="AE010299">
    <property type="protein sequence ID" value="AAM06668.1"/>
    <property type="molecule type" value="Genomic_DNA"/>
</dbReference>
<dbReference type="RefSeq" id="WP_011023231.1">
    <property type="nucleotide sequence ID" value="NC_003552.1"/>
</dbReference>
<dbReference type="SMR" id="Q8TKU6"/>
<dbReference type="STRING" id="188937.MA_3298"/>
<dbReference type="EnsemblBacteria" id="AAM06668">
    <property type="protein sequence ID" value="AAM06668"/>
    <property type="gene ID" value="MA_3298"/>
</dbReference>
<dbReference type="GeneID" id="1475191"/>
<dbReference type="KEGG" id="mac:MA_3298"/>
<dbReference type="HOGENOM" id="CLU_042853_0_0_2"/>
<dbReference type="InParanoid" id="Q8TKU6"/>
<dbReference type="OrthoDB" id="53192at2157"/>
<dbReference type="PhylomeDB" id="Q8TKU6"/>
<dbReference type="BioCyc" id="MetaCyc:MONOMER-15916"/>
<dbReference type="UniPathway" id="UPA00355"/>
<dbReference type="Proteomes" id="UP000002487">
    <property type="component" value="Chromosome"/>
</dbReference>
<dbReference type="GO" id="GO:0050545">
    <property type="term" value="F:sulfopyruvate decarboxylase activity"/>
    <property type="evidence" value="ECO:0007669"/>
    <property type="project" value="UniProtKB-EC"/>
</dbReference>
<dbReference type="GO" id="GO:0030976">
    <property type="term" value="F:thiamine pyrophosphate binding"/>
    <property type="evidence" value="ECO:0007669"/>
    <property type="project" value="InterPro"/>
</dbReference>
<dbReference type="GO" id="GO:0019295">
    <property type="term" value="P:coenzyme M biosynthetic process"/>
    <property type="evidence" value="ECO:0007669"/>
    <property type="project" value="UniProtKB-UniPathway"/>
</dbReference>
<dbReference type="CDD" id="cd03372">
    <property type="entry name" value="TPP_ComE"/>
    <property type="match status" value="1"/>
</dbReference>
<dbReference type="CDD" id="cd07035">
    <property type="entry name" value="TPP_PYR_POX_like"/>
    <property type="match status" value="1"/>
</dbReference>
<dbReference type="FunFam" id="3.40.50.970:FF:000095">
    <property type="entry name" value="Sulfopyruvate decarboxylase subunit beta"/>
    <property type="match status" value="1"/>
</dbReference>
<dbReference type="Gene3D" id="3.40.50.970">
    <property type="match status" value="1"/>
</dbReference>
<dbReference type="InterPro" id="IPR022502">
    <property type="entry name" value="Sulfopyruvate_deCO2ase_alpha"/>
</dbReference>
<dbReference type="InterPro" id="IPR022494">
    <property type="entry name" value="Sulfopyruvate_deCO2ase_bsu"/>
</dbReference>
<dbReference type="InterPro" id="IPR029061">
    <property type="entry name" value="THDP-binding"/>
</dbReference>
<dbReference type="InterPro" id="IPR012001">
    <property type="entry name" value="Thiamin_PyroP_enz_TPP-bd_dom"/>
</dbReference>
<dbReference type="InterPro" id="IPR051818">
    <property type="entry name" value="TPP_dependent_decarboxylase"/>
</dbReference>
<dbReference type="InterPro" id="IPR011766">
    <property type="entry name" value="TPP_enzyme_TPP-bd"/>
</dbReference>
<dbReference type="NCBIfam" id="TIGR03846">
    <property type="entry name" value="sulfopy_beta"/>
    <property type="match status" value="1"/>
</dbReference>
<dbReference type="NCBIfam" id="TIGR03845">
    <property type="entry name" value="sulfopyru_alph"/>
    <property type="match status" value="1"/>
</dbReference>
<dbReference type="PANTHER" id="PTHR42818:SF1">
    <property type="entry name" value="SULFOPYRUVATE DECARBOXYLASE"/>
    <property type="match status" value="1"/>
</dbReference>
<dbReference type="PANTHER" id="PTHR42818">
    <property type="entry name" value="SULFOPYRUVATE DECARBOXYLASE SUBUNIT ALPHA"/>
    <property type="match status" value="1"/>
</dbReference>
<dbReference type="Pfam" id="PF02775">
    <property type="entry name" value="TPP_enzyme_C"/>
    <property type="match status" value="1"/>
</dbReference>
<dbReference type="Pfam" id="PF02776">
    <property type="entry name" value="TPP_enzyme_N"/>
    <property type="match status" value="1"/>
</dbReference>
<dbReference type="SUPFAM" id="SSF52518">
    <property type="entry name" value="Thiamin diphosphate-binding fold (THDP-binding)"/>
    <property type="match status" value="2"/>
</dbReference>